<comment type="catalytic activity">
    <reaction evidence="1">
        <text>5-dehydro-4-deoxy-D-glucarate + H(+) = 2,5-dioxopentanoate + CO2 + H2O</text>
        <dbReference type="Rhea" id="RHEA:24608"/>
        <dbReference type="ChEBI" id="CHEBI:15377"/>
        <dbReference type="ChEBI" id="CHEBI:15378"/>
        <dbReference type="ChEBI" id="CHEBI:16526"/>
        <dbReference type="ChEBI" id="CHEBI:42819"/>
        <dbReference type="ChEBI" id="CHEBI:58136"/>
        <dbReference type="EC" id="4.2.1.41"/>
    </reaction>
</comment>
<comment type="pathway">
    <text evidence="1">Carbohydrate acid metabolism; D-glucarate degradation; 2,5-dioxopentanoate from D-glucarate: step 2/2.</text>
</comment>
<comment type="similarity">
    <text evidence="1">Belongs to the DapA family.</text>
</comment>
<reference key="1">
    <citation type="journal article" date="2001" name="Proc. Natl. Acad. Sci. U.S.A.">
        <title>Nucleotide sequence and predicted functions of the entire Sinorhizobium meliloti pSymA megaplasmid.</title>
        <authorList>
            <person name="Barnett M.J."/>
            <person name="Fisher R.F."/>
            <person name="Jones T."/>
            <person name="Komp C."/>
            <person name="Abola A.P."/>
            <person name="Barloy-Hubler F."/>
            <person name="Bowser L."/>
            <person name="Capela D."/>
            <person name="Galibert F."/>
            <person name="Gouzy J."/>
            <person name="Gurjal M."/>
            <person name="Hong A."/>
            <person name="Huizar L."/>
            <person name="Hyman R.W."/>
            <person name="Kahn D."/>
            <person name="Kahn M.L."/>
            <person name="Kalman S."/>
            <person name="Keating D.H."/>
            <person name="Palm C."/>
            <person name="Peck M.C."/>
            <person name="Surzycki R."/>
            <person name="Wells D.H."/>
            <person name="Yeh K.-C."/>
            <person name="Davis R.W."/>
            <person name="Federspiel N.A."/>
            <person name="Long S.R."/>
        </authorList>
    </citation>
    <scope>NUCLEOTIDE SEQUENCE [LARGE SCALE GENOMIC DNA]</scope>
    <source>
        <strain>1021</strain>
    </source>
</reference>
<reference key="2">
    <citation type="journal article" date="2001" name="Science">
        <title>The composite genome of the legume symbiont Sinorhizobium meliloti.</title>
        <authorList>
            <person name="Galibert F."/>
            <person name="Finan T.M."/>
            <person name="Long S.R."/>
            <person name="Puehler A."/>
            <person name="Abola P."/>
            <person name="Ampe F."/>
            <person name="Barloy-Hubler F."/>
            <person name="Barnett M.J."/>
            <person name="Becker A."/>
            <person name="Boistard P."/>
            <person name="Bothe G."/>
            <person name="Boutry M."/>
            <person name="Bowser L."/>
            <person name="Buhrmester J."/>
            <person name="Cadieu E."/>
            <person name="Capela D."/>
            <person name="Chain P."/>
            <person name="Cowie A."/>
            <person name="Davis R.W."/>
            <person name="Dreano S."/>
            <person name="Federspiel N.A."/>
            <person name="Fisher R.F."/>
            <person name="Gloux S."/>
            <person name="Godrie T."/>
            <person name="Goffeau A."/>
            <person name="Golding B."/>
            <person name="Gouzy J."/>
            <person name="Gurjal M."/>
            <person name="Hernandez-Lucas I."/>
            <person name="Hong A."/>
            <person name="Huizar L."/>
            <person name="Hyman R.W."/>
            <person name="Jones T."/>
            <person name="Kahn D."/>
            <person name="Kahn M.L."/>
            <person name="Kalman S."/>
            <person name="Keating D.H."/>
            <person name="Kiss E."/>
            <person name="Komp C."/>
            <person name="Lelaure V."/>
            <person name="Masuy D."/>
            <person name="Palm C."/>
            <person name="Peck M.C."/>
            <person name="Pohl T.M."/>
            <person name="Portetelle D."/>
            <person name="Purnelle B."/>
            <person name="Ramsperger U."/>
            <person name="Surzycki R."/>
            <person name="Thebault P."/>
            <person name="Vandenbol M."/>
            <person name="Vorhoelter F.J."/>
            <person name="Weidner S."/>
            <person name="Wells D.H."/>
            <person name="Wong K."/>
            <person name="Yeh K.-C."/>
            <person name="Batut J."/>
        </authorList>
    </citation>
    <scope>NUCLEOTIDE SEQUENCE [LARGE SCALE GENOMIC DNA]</scope>
    <source>
        <strain>1021</strain>
    </source>
</reference>
<keyword id="KW-0456">Lyase</keyword>
<keyword id="KW-0614">Plasmid</keyword>
<keyword id="KW-1185">Reference proteome</keyword>
<dbReference type="EC" id="4.2.1.41" evidence="1"/>
<dbReference type="EMBL" id="AE006469">
    <property type="protein sequence ID" value="AAK65445.1"/>
    <property type="molecule type" value="Genomic_DNA"/>
</dbReference>
<dbReference type="PIR" id="C95360">
    <property type="entry name" value="C95360"/>
</dbReference>
<dbReference type="RefSeq" id="NP_436033.1">
    <property type="nucleotide sequence ID" value="NC_003037.1"/>
</dbReference>
<dbReference type="SMR" id="Q92YS6"/>
<dbReference type="EnsemblBacteria" id="AAK65445">
    <property type="protein sequence ID" value="AAK65445"/>
    <property type="gene ID" value="SMa1440"/>
</dbReference>
<dbReference type="KEGG" id="sme:SMa1440"/>
<dbReference type="PATRIC" id="fig|266834.11.peg.815"/>
<dbReference type="HOGENOM" id="CLU_049343_5_2_5"/>
<dbReference type="OrthoDB" id="8995637at2"/>
<dbReference type="UniPathway" id="UPA00564">
    <property type="reaction ID" value="UER00628"/>
</dbReference>
<dbReference type="PRO" id="PR:Q92YS6"/>
<dbReference type="Proteomes" id="UP000001976">
    <property type="component" value="Plasmid pSymA"/>
</dbReference>
<dbReference type="GO" id="GO:0008840">
    <property type="term" value="F:4-hydroxy-tetrahydrodipicolinate synthase activity"/>
    <property type="evidence" value="ECO:0007669"/>
    <property type="project" value="TreeGrafter"/>
</dbReference>
<dbReference type="GO" id="GO:0047448">
    <property type="term" value="F:5-dehydro-4-deoxyglucarate dehydratase activity"/>
    <property type="evidence" value="ECO:0007669"/>
    <property type="project" value="UniProtKB-UniRule"/>
</dbReference>
<dbReference type="GO" id="GO:0042838">
    <property type="term" value="P:D-glucarate catabolic process"/>
    <property type="evidence" value="ECO:0007669"/>
    <property type="project" value="UniProtKB-UniRule"/>
</dbReference>
<dbReference type="CDD" id="cd00951">
    <property type="entry name" value="KDGDH"/>
    <property type="match status" value="1"/>
</dbReference>
<dbReference type="Gene3D" id="3.20.20.70">
    <property type="entry name" value="Aldolase class I"/>
    <property type="match status" value="1"/>
</dbReference>
<dbReference type="HAMAP" id="MF_00694">
    <property type="entry name" value="KDGDH"/>
    <property type="match status" value="1"/>
</dbReference>
<dbReference type="InterPro" id="IPR013785">
    <property type="entry name" value="Aldolase_TIM"/>
</dbReference>
<dbReference type="InterPro" id="IPR002220">
    <property type="entry name" value="DapA-like"/>
</dbReference>
<dbReference type="InterPro" id="IPR017655">
    <property type="entry name" value="Dehydro-deoxyglucarate_dehyd"/>
</dbReference>
<dbReference type="NCBIfam" id="TIGR03249">
    <property type="entry name" value="KdgD"/>
    <property type="match status" value="1"/>
</dbReference>
<dbReference type="NCBIfam" id="NF002958">
    <property type="entry name" value="PRK03620.1"/>
    <property type="match status" value="1"/>
</dbReference>
<dbReference type="PANTHER" id="PTHR12128:SF19">
    <property type="entry name" value="5-DEHYDRO-4-DEOXYGLUCARATE DEHYDRATASE 2-RELATED"/>
    <property type="match status" value="1"/>
</dbReference>
<dbReference type="PANTHER" id="PTHR12128">
    <property type="entry name" value="DIHYDRODIPICOLINATE SYNTHASE"/>
    <property type="match status" value="1"/>
</dbReference>
<dbReference type="Pfam" id="PF00701">
    <property type="entry name" value="DHDPS"/>
    <property type="match status" value="1"/>
</dbReference>
<dbReference type="PIRSF" id="PIRSF001365">
    <property type="entry name" value="DHDPS"/>
    <property type="match status" value="1"/>
</dbReference>
<dbReference type="SMART" id="SM01130">
    <property type="entry name" value="DHDPS"/>
    <property type="match status" value="1"/>
</dbReference>
<dbReference type="SUPFAM" id="SSF51569">
    <property type="entry name" value="Aldolase"/>
    <property type="match status" value="1"/>
</dbReference>
<evidence type="ECO:0000255" key="1">
    <source>
        <dbReference type="HAMAP-Rule" id="MF_00694"/>
    </source>
</evidence>
<gene>
    <name type="ordered locus">RA0787</name>
    <name type="ORF">SMa1440</name>
</gene>
<geneLocation type="plasmid">
    <name>pSymA</name>
    <name>megaplasmid 1</name>
</geneLocation>
<sequence length="301" mass="32245">MSPEEIKSRVGSGLLSFPVTHFTSDYKLNLESYRRHVEWLSGFEAAALFAAGGTGEFFSLSPNEVGQVTRAAKDVSGEVPIIAGCGYGTSLAVETAKIVEEAGADGILLLPHYLTEAPQEGIYAHVKAVCDSTGLGVILYNRANSVANADTVARLAEACPNLIGFKDGTGKVDLVRHVTAKLGDRLCYIGGMPTHELFAEGFNGVGVTTYSSAVFNFVPELAQRFYRAMRAGDRAVMEGILHTFFFPFAALRDRKAGYPVSIIKAGVELAGFAPGPVRPPLVDLTGEEREILQGLIEASRR</sequence>
<feature type="chain" id="PRO_0000103238" description="Probable 5-dehydro-4-deoxyglucarate dehydratase">
    <location>
        <begin position="1"/>
        <end position="301"/>
    </location>
</feature>
<protein>
    <recommendedName>
        <fullName evidence="1">Probable 5-dehydro-4-deoxyglucarate dehydratase</fullName>
        <ecNumber evidence="1">4.2.1.41</ecNumber>
    </recommendedName>
    <alternativeName>
        <fullName evidence="1">5-keto-4-deoxy-glucarate dehydratase</fullName>
        <shortName evidence="1">KDGDH</shortName>
    </alternativeName>
</protein>
<accession>Q92YS6</accession>
<organism>
    <name type="scientific">Rhizobium meliloti (strain 1021)</name>
    <name type="common">Ensifer meliloti</name>
    <name type="synonym">Sinorhizobium meliloti</name>
    <dbReference type="NCBI Taxonomy" id="266834"/>
    <lineage>
        <taxon>Bacteria</taxon>
        <taxon>Pseudomonadati</taxon>
        <taxon>Pseudomonadota</taxon>
        <taxon>Alphaproteobacteria</taxon>
        <taxon>Hyphomicrobiales</taxon>
        <taxon>Rhizobiaceae</taxon>
        <taxon>Sinorhizobium/Ensifer group</taxon>
        <taxon>Sinorhizobium</taxon>
    </lineage>
</organism>
<name>KDGD_RHIME</name>
<proteinExistence type="inferred from homology"/>